<feature type="chain" id="PRO_0000066850" description="Potassium channel toxin gamma-KTx 1.5">
    <location>
        <begin position="1"/>
        <end position="42"/>
    </location>
</feature>
<feature type="disulfide bond" evidence="2">
    <location>
        <begin position="5"/>
        <end position="23"/>
    </location>
</feature>
<feature type="disulfide bond" evidence="2">
    <location>
        <begin position="11"/>
        <end position="34"/>
    </location>
</feature>
<feature type="disulfide bond" evidence="2">
    <location>
        <begin position="20"/>
        <end position="39"/>
    </location>
</feature>
<feature type="disulfide bond" evidence="2">
    <location>
        <begin position="24"/>
        <end position="41"/>
    </location>
</feature>
<name>KGX15_CENLI</name>
<accession>Q86QV0</accession>
<keyword id="KW-0903">Direct protein sequencing</keyword>
<keyword id="KW-1015">Disulfide bond</keyword>
<keyword id="KW-0872">Ion channel impairing toxin</keyword>
<keyword id="KW-0960">Knottin</keyword>
<keyword id="KW-0528">Neurotoxin</keyword>
<keyword id="KW-0632">Potassium channel impairing toxin</keyword>
<keyword id="KW-0964">Secreted</keyword>
<keyword id="KW-0800">Toxin</keyword>
<keyword id="KW-1220">Voltage-gated potassium channel impairing toxin</keyword>
<comment type="function">
    <text evidence="2">Blocks Kv11/ERG potassium channels.</text>
</comment>
<comment type="subcellular location">
    <subcellularLocation>
        <location evidence="3">Secreted</location>
    </subcellularLocation>
</comment>
<comment type="tissue specificity">
    <text evidence="5">Expressed by the venom gland.</text>
</comment>
<comment type="domain">
    <text evidence="1">The presence of a 'disulfide through disulfide knot' structurally defines this protein as a knottin.</text>
</comment>
<comment type="domain">
    <text evidence="2">Has the CSalpha/beta fold, which comprises one or two short alpha helices connected to anti-parallel beta-sheets stabilized by three or four disulfide bonds.</text>
</comment>
<comment type="similarity">
    <text evidence="5">Belongs to the ergtoxin family. Gamma-KTx 1 subfamily.</text>
</comment>
<dbReference type="EMBL" id="AY159343">
    <property type="protein sequence ID" value="AAO22221.1"/>
    <property type="molecule type" value="mRNA"/>
</dbReference>
<dbReference type="SMR" id="Q86QV0"/>
<dbReference type="GO" id="GO:0005576">
    <property type="term" value="C:extracellular region"/>
    <property type="evidence" value="ECO:0007669"/>
    <property type="project" value="UniProtKB-SubCell"/>
</dbReference>
<dbReference type="GO" id="GO:0019870">
    <property type="term" value="F:potassium channel inhibitor activity"/>
    <property type="evidence" value="ECO:0007669"/>
    <property type="project" value="InterPro"/>
</dbReference>
<dbReference type="GO" id="GO:0090729">
    <property type="term" value="F:toxin activity"/>
    <property type="evidence" value="ECO:0007669"/>
    <property type="project" value="UniProtKB-KW"/>
</dbReference>
<dbReference type="Gene3D" id="3.30.30.10">
    <property type="entry name" value="Knottin, scorpion toxin-like"/>
    <property type="match status" value="1"/>
</dbReference>
<dbReference type="InterPro" id="IPR012622">
    <property type="entry name" value="Ergtoxin"/>
</dbReference>
<dbReference type="InterPro" id="IPR036574">
    <property type="entry name" value="Scorpion_toxin-like_sf"/>
</dbReference>
<dbReference type="Pfam" id="PF08086">
    <property type="entry name" value="Toxin_17"/>
    <property type="match status" value="1"/>
</dbReference>
<dbReference type="SUPFAM" id="SSF57095">
    <property type="entry name" value="Scorpion toxin-like"/>
    <property type="match status" value="1"/>
</dbReference>
<dbReference type="PROSITE" id="PS60026">
    <property type="entry name" value="ERGTX"/>
    <property type="match status" value="1"/>
</dbReference>
<proteinExistence type="evidence at protein level"/>
<evidence type="ECO:0000250" key="1"/>
<evidence type="ECO:0000250" key="2">
    <source>
        <dbReference type="UniProtKB" id="Q86QT3"/>
    </source>
</evidence>
<evidence type="ECO:0000269" key="3">
    <source>
    </source>
</evidence>
<evidence type="ECO:0000303" key="4">
    <source>
    </source>
</evidence>
<evidence type="ECO:0000305" key="5"/>
<organism>
    <name type="scientific">Centruroides limpidus</name>
    <name type="common">Mexican scorpion</name>
    <dbReference type="NCBI Taxonomy" id="6876"/>
    <lineage>
        <taxon>Eukaryota</taxon>
        <taxon>Metazoa</taxon>
        <taxon>Ecdysozoa</taxon>
        <taxon>Arthropoda</taxon>
        <taxon>Chelicerata</taxon>
        <taxon>Arachnida</taxon>
        <taxon>Scorpiones</taxon>
        <taxon>Buthida</taxon>
        <taxon>Buthoidea</taxon>
        <taxon>Buthidae</taxon>
        <taxon>Centruroides</taxon>
    </lineage>
</organism>
<protein>
    <recommendedName>
        <fullName evidence="4">Potassium channel toxin gamma-KTx 1.5</fullName>
    </recommendedName>
    <alternativeName>
        <fullName evidence="4">CllErgTx1</fullName>
        <shortName evidence="4">CllErg1</shortName>
    </alternativeName>
    <alternativeName>
        <fullName evidence="4">Ergtoxin-like protein</fullName>
    </alternativeName>
</protein>
<sequence>DRDSCVDKSRCSKYGYYQECQDCCKKAGHNGGTCMFFKCKCA</sequence>
<reference key="1">
    <citation type="journal article" date="2002" name="FEBS Lett.">
        <title>A large number of novel Ergtoxin-like genes and ERG K+-channels blocking peptides from scorpions of the genus Centruroides.</title>
        <authorList>
            <person name="Corona M."/>
            <person name="Gurrola G.B."/>
            <person name="Merino E."/>
            <person name="Cassulini R.R."/>
            <person name="Valdez-Cruz N.A."/>
            <person name="Garcia B."/>
            <person name="Ramirez-Dominguez M.E."/>
            <person name="Coronas F.I."/>
            <person name="Zamudio F.Z."/>
            <person name="Wanke E."/>
            <person name="Possani L.D."/>
        </authorList>
    </citation>
    <scope>NUCLEOTIDE SEQUENCE [MRNA]</scope>
    <scope>PROTEIN SEQUENCE</scope>
    <scope>SUBCELLULAR LOCATION</scope>
    <scope>NOMENCLATURE</scope>
    <source>
        <tissue>Venom</tissue>
        <tissue>Venom gland</tissue>
    </source>
</reference>